<accession>P0DG68</accession>
<accession>Q877W3</accession>
<accession>Q8K5G5</accession>
<reference key="1">
    <citation type="journal article" date="2002" name="Proc. Natl. Acad. Sci. U.S.A.">
        <title>Genome sequence of a serotype M3 strain of group A Streptococcus: phage-encoded toxins, the high-virulence phenotype, and clone emergence.</title>
        <authorList>
            <person name="Beres S.B."/>
            <person name="Sylva G.L."/>
            <person name="Barbian K.D."/>
            <person name="Lei B."/>
            <person name="Hoff J.S."/>
            <person name="Mammarella N.D."/>
            <person name="Liu M.-Y."/>
            <person name="Smoot J.C."/>
            <person name="Porcella S.F."/>
            <person name="Parkins L.D."/>
            <person name="Campbell D.S."/>
            <person name="Smith T.M."/>
            <person name="McCormick J.K."/>
            <person name="Leung D.Y.M."/>
            <person name="Schlievert P.M."/>
            <person name="Musser J.M."/>
        </authorList>
    </citation>
    <scope>NUCLEOTIDE SEQUENCE [LARGE SCALE GENOMIC DNA]</scope>
    <source>
        <strain>ATCC BAA-595 / MGAS315</strain>
    </source>
</reference>
<evidence type="ECO:0000250" key="1"/>
<evidence type="ECO:0000250" key="2">
    <source>
        <dbReference type="UniProtKB" id="Q0P8H3"/>
    </source>
</evidence>
<evidence type="ECO:0000255" key="3"/>
<evidence type="ECO:0000305" key="4"/>
<gene>
    <name type="primary">hasB</name>
    <name type="ordered locus">SpyM3_1852</name>
</gene>
<sequence>MKIAVAGSGYVGLSLGVLLSLQNEVTIVDILPSKVDKINNGLSPIQDEYIEYYLKSKQLSIKATLDSKAAYKEAELVIIATPTNYNSRINYFDTQHVETVIKEVLSVNSHATLIIKSTIPIGFITEMRQKFQTDRIIFSPEFLRESKALYDNLYPSRIIVSCEENDSPKVKADAEKFALLLKSAAKKNNVPVLIMGASEAEAVKLFANTYLALRVAYFNELDTYAESRKLNSHMVIQGISYDDRIGMHYNNPSFGYGGYCLPKDTKQLLANYNNIPQTLIEAIVSSNNVRKSYIAKQIINVLEEQESPVKVVGVYRLIMKSNSDNFRESAIKDVIDILKSKDIKIIIYEPMLNKLESEDQSVLVNDLENFKKQANIIVTNRYDNELQDVKNKVYSRDIFGRD</sequence>
<dbReference type="EC" id="1.1.1.22"/>
<dbReference type="EMBL" id="AE014074">
    <property type="protein sequence ID" value="AAM80459.1"/>
    <property type="molecule type" value="Genomic_DNA"/>
</dbReference>
<dbReference type="RefSeq" id="WP_002992300.1">
    <property type="nucleotide sequence ID" value="NC_004070.1"/>
</dbReference>
<dbReference type="SMR" id="P0DG68"/>
<dbReference type="KEGG" id="spg:SpyM3_1852"/>
<dbReference type="HOGENOM" id="CLU_023810_2_0_9"/>
<dbReference type="UniPathway" id="UPA00038">
    <property type="reaction ID" value="UER00491"/>
</dbReference>
<dbReference type="Proteomes" id="UP000000564">
    <property type="component" value="Chromosome"/>
</dbReference>
<dbReference type="GO" id="GO:0051287">
    <property type="term" value="F:NAD binding"/>
    <property type="evidence" value="ECO:0000250"/>
    <property type="project" value="UniProtKB"/>
</dbReference>
<dbReference type="GO" id="GO:0003979">
    <property type="term" value="F:UDP-glucose 6-dehydrogenase activity"/>
    <property type="evidence" value="ECO:0000250"/>
    <property type="project" value="UniProtKB"/>
</dbReference>
<dbReference type="GO" id="GO:0000271">
    <property type="term" value="P:polysaccharide biosynthetic process"/>
    <property type="evidence" value="ECO:0007669"/>
    <property type="project" value="InterPro"/>
</dbReference>
<dbReference type="GO" id="GO:0006065">
    <property type="term" value="P:UDP-glucuronate biosynthetic process"/>
    <property type="evidence" value="ECO:0007669"/>
    <property type="project" value="UniProtKB-UniPathway"/>
</dbReference>
<dbReference type="FunFam" id="3.40.50.720:FF:000400">
    <property type="entry name" value="UDP-glucose 6-dehydrogenase"/>
    <property type="match status" value="1"/>
</dbReference>
<dbReference type="Gene3D" id="1.10.1040.10">
    <property type="entry name" value="N-(1-d-carboxylethyl)-l-norvaline Dehydrogenase, domain 2"/>
    <property type="match status" value="1"/>
</dbReference>
<dbReference type="Gene3D" id="3.40.50.720">
    <property type="entry name" value="NAD(P)-binding Rossmann-like Domain"/>
    <property type="match status" value="2"/>
</dbReference>
<dbReference type="InterPro" id="IPR008927">
    <property type="entry name" value="6-PGluconate_DH-like_C_sf"/>
</dbReference>
<dbReference type="InterPro" id="IPR013328">
    <property type="entry name" value="6PGD_dom2"/>
</dbReference>
<dbReference type="InterPro" id="IPR036291">
    <property type="entry name" value="NAD(P)-bd_dom_sf"/>
</dbReference>
<dbReference type="InterPro" id="IPR017476">
    <property type="entry name" value="UDP-Glc/GDP-Man"/>
</dbReference>
<dbReference type="InterPro" id="IPR014027">
    <property type="entry name" value="UDP-Glc/GDP-Man_DH_C"/>
</dbReference>
<dbReference type="InterPro" id="IPR036220">
    <property type="entry name" value="UDP-Glc/GDP-Man_DH_C_sf"/>
</dbReference>
<dbReference type="InterPro" id="IPR014026">
    <property type="entry name" value="UDP-Glc/GDP-Man_DH_dimer"/>
</dbReference>
<dbReference type="InterPro" id="IPR001732">
    <property type="entry name" value="UDP-Glc/GDP-Man_DH_N"/>
</dbReference>
<dbReference type="InterPro" id="IPR028357">
    <property type="entry name" value="UDPglc_DH_bac"/>
</dbReference>
<dbReference type="NCBIfam" id="TIGR03026">
    <property type="entry name" value="NDP-sugDHase"/>
    <property type="match status" value="1"/>
</dbReference>
<dbReference type="PANTHER" id="PTHR43750:SF2">
    <property type="entry name" value="UDP-GLUCOSE 6-DEHYDROGENASE"/>
    <property type="match status" value="1"/>
</dbReference>
<dbReference type="PANTHER" id="PTHR43750">
    <property type="entry name" value="UDP-GLUCOSE 6-DEHYDROGENASE TUAD"/>
    <property type="match status" value="1"/>
</dbReference>
<dbReference type="Pfam" id="PF00984">
    <property type="entry name" value="UDPG_MGDP_dh"/>
    <property type="match status" value="1"/>
</dbReference>
<dbReference type="Pfam" id="PF03720">
    <property type="entry name" value="UDPG_MGDP_dh_C"/>
    <property type="match status" value="1"/>
</dbReference>
<dbReference type="Pfam" id="PF03721">
    <property type="entry name" value="UDPG_MGDP_dh_N"/>
    <property type="match status" value="1"/>
</dbReference>
<dbReference type="PIRSF" id="PIRSF500134">
    <property type="entry name" value="UDPglc_DH_bac"/>
    <property type="match status" value="1"/>
</dbReference>
<dbReference type="PIRSF" id="PIRSF000124">
    <property type="entry name" value="UDPglc_GDPman_dh"/>
    <property type="match status" value="1"/>
</dbReference>
<dbReference type="SMART" id="SM00984">
    <property type="entry name" value="UDPG_MGDP_dh_C"/>
    <property type="match status" value="1"/>
</dbReference>
<dbReference type="SUPFAM" id="SSF48179">
    <property type="entry name" value="6-phosphogluconate dehydrogenase C-terminal domain-like"/>
    <property type="match status" value="1"/>
</dbReference>
<dbReference type="SUPFAM" id="SSF51735">
    <property type="entry name" value="NAD(P)-binding Rossmann-fold domains"/>
    <property type="match status" value="1"/>
</dbReference>
<dbReference type="SUPFAM" id="SSF52413">
    <property type="entry name" value="UDP-glucose/GDP-mannose dehydrogenase C-terminal domain"/>
    <property type="match status" value="1"/>
</dbReference>
<name>UDG_STRP3</name>
<proteinExistence type="inferred from homology"/>
<organism>
    <name type="scientific">Streptococcus pyogenes serotype M3 (strain ATCC BAA-595 / MGAS315)</name>
    <dbReference type="NCBI Taxonomy" id="198466"/>
    <lineage>
        <taxon>Bacteria</taxon>
        <taxon>Bacillati</taxon>
        <taxon>Bacillota</taxon>
        <taxon>Bacilli</taxon>
        <taxon>Lactobacillales</taxon>
        <taxon>Streptococcaceae</taxon>
        <taxon>Streptococcus</taxon>
    </lineage>
</organism>
<comment type="function">
    <text evidence="1">Catalyzes the formation of UDP-glucuronic acid which is required for capsular hyaluronic acid synthesis.</text>
</comment>
<comment type="catalytic activity">
    <reaction>
        <text>UDP-alpha-D-glucose + 2 NAD(+) + H2O = UDP-alpha-D-glucuronate + 2 NADH + 3 H(+)</text>
        <dbReference type="Rhea" id="RHEA:23596"/>
        <dbReference type="ChEBI" id="CHEBI:15377"/>
        <dbReference type="ChEBI" id="CHEBI:15378"/>
        <dbReference type="ChEBI" id="CHEBI:57540"/>
        <dbReference type="ChEBI" id="CHEBI:57945"/>
        <dbReference type="ChEBI" id="CHEBI:58052"/>
        <dbReference type="ChEBI" id="CHEBI:58885"/>
        <dbReference type="EC" id="1.1.1.22"/>
    </reaction>
</comment>
<comment type="pathway">
    <text>Nucleotide-sugar biosynthesis; UDP-alpha-D-glucuronate biosynthesis; UDP-alpha-D-glucuronate from UDP-alpha-D-glucose: step 1/1.</text>
</comment>
<comment type="similarity">
    <text evidence="4">Belongs to the UDP-glucose/GDP-mannose dehydrogenase family.</text>
</comment>
<feature type="chain" id="PRO_0000074056" description="UDP-glucose 6-dehydrogenase">
    <location>
        <begin position="1"/>
        <end position="402"/>
    </location>
</feature>
<feature type="active site" description="Nucleophile" evidence="2">
    <location>
        <position position="260"/>
    </location>
</feature>
<feature type="binding site" evidence="3">
    <location>
        <begin position="2"/>
        <end position="19"/>
    </location>
    <ligand>
        <name>NAD(+)</name>
        <dbReference type="ChEBI" id="CHEBI:57540"/>
    </ligand>
</feature>
<feature type="binding site" evidence="2">
    <location>
        <position position="11"/>
    </location>
    <ligand>
        <name>NAD(+)</name>
        <dbReference type="ChEBI" id="CHEBI:57540"/>
    </ligand>
</feature>
<feature type="binding site" evidence="2">
    <location>
        <position position="29"/>
    </location>
    <ligand>
        <name>NAD(+)</name>
        <dbReference type="ChEBI" id="CHEBI:57540"/>
    </ligand>
</feature>
<feature type="binding site" evidence="2">
    <location>
        <position position="34"/>
    </location>
    <ligand>
        <name>NAD(+)</name>
        <dbReference type="ChEBI" id="CHEBI:57540"/>
    </ligand>
</feature>
<feature type="binding site" evidence="2">
    <location>
        <position position="83"/>
    </location>
    <ligand>
        <name>NAD(+)</name>
        <dbReference type="ChEBI" id="CHEBI:57540"/>
    </ligand>
</feature>
<feature type="binding site" evidence="2">
    <location>
        <position position="118"/>
    </location>
    <ligand>
        <name>NAD(+)</name>
        <dbReference type="ChEBI" id="CHEBI:57540"/>
    </ligand>
</feature>
<feature type="binding site" evidence="2">
    <location>
        <begin position="141"/>
        <end position="145"/>
    </location>
    <ligand>
        <name>substrate</name>
    </ligand>
</feature>
<feature type="binding site" evidence="2">
    <location>
        <position position="145"/>
    </location>
    <ligand>
        <name>NAD(+)</name>
        <dbReference type="ChEBI" id="CHEBI:57540"/>
    </ligand>
</feature>
<feature type="binding site" evidence="2">
    <location>
        <position position="204"/>
    </location>
    <ligand>
        <name>substrate</name>
    </ligand>
</feature>
<feature type="binding site" evidence="2">
    <location>
        <position position="208"/>
    </location>
    <ligand>
        <name>substrate</name>
    </ligand>
</feature>
<feature type="binding site" evidence="2">
    <location>
        <begin position="249"/>
        <end position="253"/>
    </location>
    <ligand>
        <name>substrate</name>
    </ligand>
</feature>
<feature type="binding site" evidence="2">
    <location>
        <position position="257"/>
    </location>
    <ligand>
        <name>substrate</name>
    </ligand>
</feature>
<feature type="binding site" evidence="2">
    <location>
        <position position="259"/>
    </location>
    <ligand>
        <name>NAD(+)</name>
        <dbReference type="ChEBI" id="CHEBI:57540"/>
    </ligand>
</feature>
<feature type="binding site" evidence="2">
    <location>
        <position position="263"/>
    </location>
    <ligand>
        <name>NAD(+)</name>
        <dbReference type="ChEBI" id="CHEBI:57540"/>
    </ligand>
</feature>
<feature type="binding site" evidence="2">
    <location>
        <position position="320"/>
    </location>
    <ligand>
        <name>substrate</name>
    </ligand>
</feature>
<feature type="binding site" evidence="2">
    <location>
        <position position="327"/>
    </location>
    <ligand>
        <name>NAD(+)</name>
        <dbReference type="ChEBI" id="CHEBI:57540"/>
    </ligand>
</feature>
<keyword id="KW-0972">Capsule biogenesis/degradation</keyword>
<keyword id="KW-0520">NAD</keyword>
<keyword id="KW-0560">Oxidoreductase</keyword>
<protein>
    <recommendedName>
        <fullName>UDP-glucose 6-dehydrogenase</fullName>
        <shortName>UDP-Glc dehydrogenase</shortName>
        <shortName>UDP-GlcDH</shortName>
        <shortName>UDPGDH</shortName>
        <ecNumber>1.1.1.22</ecNumber>
    </recommendedName>
</protein>